<gene>
    <name type="primary">luxD</name>
</gene>
<feature type="chain" id="PRO_0000220195" description="Acyl transferase">
    <location>
        <begin position="1"/>
        <end position="305"/>
    </location>
</feature>
<feature type="active site" description="Charge relay system">
    <location>
        <position position="114"/>
    </location>
</feature>
<feature type="active site" description="Charge relay system">
    <location>
        <position position="211"/>
    </location>
</feature>
<feature type="active site" description="Charge relay system">
    <location>
        <position position="241"/>
    </location>
</feature>
<feature type="sequence variant" description="In mutant M17.">
    <original>G</original>
    <variation>E</variation>
    <location>
        <position position="75"/>
    </location>
</feature>
<feature type="strand" evidence="2">
    <location>
        <begin position="8"/>
        <end position="14"/>
    </location>
</feature>
<feature type="turn" evidence="2">
    <location>
        <begin position="15"/>
        <end position="17"/>
    </location>
</feature>
<feature type="strand" evidence="2">
    <location>
        <begin position="18"/>
        <end position="25"/>
    </location>
</feature>
<feature type="strand" evidence="2">
    <location>
        <begin position="37"/>
        <end position="41"/>
    </location>
</feature>
<feature type="helix" evidence="2">
    <location>
        <begin position="46"/>
        <end position="51"/>
    </location>
</feature>
<feature type="helix" evidence="2">
    <location>
        <begin position="52"/>
        <end position="59"/>
    </location>
</feature>
<feature type="turn" evidence="2">
    <location>
        <begin position="60"/>
        <end position="62"/>
    </location>
</feature>
<feature type="strand" evidence="2">
    <location>
        <begin position="65"/>
        <end position="68"/>
    </location>
</feature>
<feature type="helix" evidence="2">
    <location>
        <begin position="86"/>
        <end position="102"/>
    </location>
</feature>
<feature type="strand" evidence="2">
    <location>
        <begin position="108"/>
        <end position="113"/>
    </location>
</feature>
<feature type="helix" evidence="2">
    <location>
        <begin position="116"/>
        <end position="123"/>
    </location>
</feature>
<feature type="turn" evidence="2">
    <location>
        <begin position="124"/>
        <end position="126"/>
    </location>
</feature>
<feature type="strand" evidence="2">
    <location>
        <begin position="130"/>
        <end position="136"/>
    </location>
</feature>
<feature type="helix" evidence="2">
    <location>
        <begin position="141"/>
        <end position="149"/>
    </location>
</feature>
<feature type="helix" evidence="2">
    <location>
        <begin position="153"/>
        <end position="155"/>
    </location>
</feature>
<feature type="helix" evidence="2">
    <location>
        <begin position="158"/>
        <end position="160"/>
    </location>
</feature>
<feature type="strand" evidence="2">
    <location>
        <begin position="163"/>
        <end position="167"/>
    </location>
</feature>
<feature type="strand" evidence="2">
    <location>
        <begin position="170"/>
        <end position="173"/>
    </location>
</feature>
<feature type="helix" evidence="2">
    <location>
        <begin position="174"/>
        <end position="183"/>
    </location>
</feature>
<feature type="helix" evidence="2">
    <location>
        <begin position="189"/>
        <end position="196"/>
    </location>
</feature>
<feature type="strand" evidence="2">
    <location>
        <begin position="203"/>
        <end position="208"/>
    </location>
</feature>
<feature type="helix" evidence="2">
    <location>
        <begin position="216"/>
        <end position="223"/>
    </location>
</feature>
<feature type="strand" evidence="2">
    <location>
        <begin position="231"/>
        <end position="236"/>
    </location>
</feature>
<feature type="helix" evidence="2">
    <location>
        <begin position="247"/>
        <end position="265"/>
    </location>
</feature>
<feature type="helix" evidence="2">
    <location>
        <begin position="280"/>
        <end position="296"/>
    </location>
</feature>
<feature type="helix" evidence="2">
    <location>
        <begin position="297"/>
        <end position="299"/>
    </location>
</feature>
<feature type="strand" evidence="2">
    <location>
        <begin position="302"/>
        <end position="304"/>
    </location>
</feature>
<evidence type="ECO:0000305" key="1"/>
<evidence type="ECO:0007829" key="2">
    <source>
        <dbReference type="PDB" id="1THT"/>
    </source>
</evidence>
<organism>
    <name type="scientific">Vibrio harveyi</name>
    <name type="common">Beneckea harveyi</name>
    <dbReference type="NCBI Taxonomy" id="669"/>
    <lineage>
        <taxon>Bacteria</taxon>
        <taxon>Pseudomonadati</taxon>
        <taxon>Pseudomonadota</taxon>
        <taxon>Gammaproteobacteria</taxon>
        <taxon>Vibrionales</taxon>
        <taxon>Vibrionaceae</taxon>
        <taxon>Vibrio</taxon>
    </lineage>
</organism>
<accession>P05521</accession>
<accession>P11002</accession>
<comment type="function">
    <text>Acyl transferase is part of the fatty acid reductase system required for aldehyde biosynthesis; it produces fatty acids for the luminescent reaction.</text>
</comment>
<comment type="pathway">
    <text>Lipid metabolism; fatty acid reduction for biolumincescence.</text>
</comment>
<comment type="similarity">
    <text evidence="1">Belongs to the LuxD family.</text>
</comment>
<dbReference type="EC" id="2.3.1.-"/>
<dbReference type="EMBL" id="J03950">
    <property type="protein sequence ID" value="AAA27535.1"/>
    <property type="molecule type" value="Genomic_DNA"/>
</dbReference>
<dbReference type="EMBL" id="M10961">
    <property type="protein sequence ID" value="AAA88684.1"/>
    <property type="molecule type" value="Genomic_DNA"/>
</dbReference>
<dbReference type="PIR" id="A28947">
    <property type="entry name" value="A28947"/>
</dbReference>
<dbReference type="RefSeq" id="WP_069687703.1">
    <property type="nucleotide sequence ID" value="NZ_CP009468.1"/>
</dbReference>
<dbReference type="PDB" id="1THT">
    <property type="method" value="X-ray"/>
    <property type="resolution" value="2.10 A"/>
    <property type="chains" value="A/B=1-305"/>
</dbReference>
<dbReference type="PDBsum" id="1THT"/>
<dbReference type="SMR" id="P05521"/>
<dbReference type="ESTHER" id="vibha-1luxd">
    <property type="family name" value="Thioesterase_acyl-transferase"/>
</dbReference>
<dbReference type="PATRIC" id="fig|669.65.peg.3628"/>
<dbReference type="UniPathway" id="UPA00569"/>
<dbReference type="EvolutionaryTrace" id="P05521"/>
<dbReference type="GO" id="GO:0016747">
    <property type="term" value="F:acyltransferase activity, transferring groups other than amino-acyl groups"/>
    <property type="evidence" value="ECO:0007669"/>
    <property type="project" value="UniProtKB-UniRule"/>
</dbReference>
<dbReference type="GO" id="GO:0008218">
    <property type="term" value="P:bioluminescence"/>
    <property type="evidence" value="ECO:0007669"/>
    <property type="project" value="UniProtKB-UniRule"/>
</dbReference>
<dbReference type="GO" id="GO:0006631">
    <property type="term" value="P:fatty acid metabolic process"/>
    <property type="evidence" value="ECO:0007669"/>
    <property type="project" value="InterPro"/>
</dbReference>
<dbReference type="Gene3D" id="3.40.50.1820">
    <property type="entry name" value="alpha/beta hydrolase"/>
    <property type="match status" value="1"/>
</dbReference>
<dbReference type="HAMAP" id="MF_00774">
    <property type="entry name" value="LuxD"/>
    <property type="match status" value="1"/>
</dbReference>
<dbReference type="InterPro" id="IPR029058">
    <property type="entry name" value="AB_hydrolase_fold"/>
</dbReference>
<dbReference type="InterPro" id="IPR003157">
    <property type="entry name" value="LuxD"/>
</dbReference>
<dbReference type="NCBIfam" id="NF010127">
    <property type="entry name" value="PRK13604.1"/>
    <property type="match status" value="1"/>
</dbReference>
<dbReference type="Pfam" id="PF02273">
    <property type="entry name" value="Acyl_transf_2"/>
    <property type="match status" value="1"/>
</dbReference>
<dbReference type="PIRSF" id="PIRSF009416">
    <property type="entry name" value="LuxD"/>
    <property type="match status" value="1"/>
</dbReference>
<dbReference type="SUPFAM" id="SSF53474">
    <property type="entry name" value="alpha/beta-Hydrolases"/>
    <property type="match status" value="1"/>
</dbReference>
<protein>
    <recommendedName>
        <fullName>Acyl transferase</fullName>
        <shortName>ACT</shortName>
        <ecNumber>2.3.1.-</ecNumber>
    </recommendedName>
    <alternativeName>
        <fullName>C14ACP-TE</fullName>
    </alternativeName>
    <alternativeName>
        <fullName>Myristoyl-ACP-specific thioesterase</fullName>
    </alternativeName>
</protein>
<proteinExistence type="evidence at protein level"/>
<name>LUXD_VIBHA</name>
<reference key="1">
    <citation type="journal article" date="1988" name="J. Biol. Chem.">
        <title>Organization of the lux structural genes of Vibrio harveyi. Expression under the T7 bacteriophage promoter, mRNA analysis, and nucleotide sequence of the luxD gene.</title>
        <authorList>
            <person name="Miyamoto C."/>
            <person name="Boylan M."/>
            <person name="Graham A.F."/>
            <person name="Meighen E.A."/>
        </authorList>
    </citation>
    <scope>NUCLEOTIDE SEQUENCE [GENOMIC DNA]</scope>
</reference>
<reference key="2">
    <citation type="journal article" date="1985" name="J. Biol. Chem.">
        <title>Nucleotide sequence of the luxA gene of Vibrio harveyi and the complete amino acid sequence of the alpha subunit of bacterial luciferase.</title>
        <authorList>
            <person name="Cohn D.H."/>
            <person name="Mileham A.J."/>
            <person name="Simon M.I."/>
            <person name="Nealson K.H."/>
            <person name="Rausch S.K."/>
            <person name="Bonam D."/>
            <person name="Baldwin T.O."/>
        </authorList>
    </citation>
    <scope>NUCLEOTIDE SEQUENCE [GENOMIC DNA] OF 83-305</scope>
</reference>
<reference key="3">
    <citation type="journal article" date="1994" name="Biochemistry">
        <title>Structure of a myristoyl-ACP-specific thioesterase from Vibrio harveyi.</title>
        <authorList>
            <person name="Lawson D.M."/>
            <person name="Derewenda U."/>
            <person name="Serre L."/>
            <person name="Ferri S."/>
            <person name="Szittner R."/>
            <person name="Wei Y."/>
            <person name="Meighen E.A."/>
            <person name="Derewenda Z.S."/>
        </authorList>
    </citation>
    <scope>X-RAY CRYSTALLOGRAPHY (2.1 ANGSTROMS)</scope>
</reference>
<sequence length="305" mass="34207">MNNQCKTIAHVLRVNNGQELHVWETPPKENVPFKNNTILIASGFARRMDHFAGLAEYLSENGFHVFRYDSLHHVGLSSGSIDEFTMTTGKNSLCTVYHWLQTKGTQNIGLIAASLSARVAYEVISDLELSFLITAVGVVNLRDTLEKALGFDYLSLPIDELPNDLDFEGHKLGSEVFVRDCFEHHWDTLDSTLDKVANTSVPLIAFTANNDDWVKQEEVYDMLAHIRTGHCKLYSLLGSSHDLGENLVVLRNFYQSVTKAAIAMDGGSLEIDVDFIEPDFEQLTIATVNERRLKAEIESRTPEMA</sequence>
<keyword id="KW-0002">3D-structure</keyword>
<keyword id="KW-0012">Acyltransferase</keyword>
<keyword id="KW-0455">Luminescence</keyword>
<keyword id="KW-0808">Transferase</keyword>